<sequence>MANELTWHDVLAEEKQQPYFLNTLQTVASERQSGVTIYPPQKDVFNAFRFTELGDVKVVILGQDPYHGPGQAHGLAFSVRPGIATPPSLLNMYKELENTIPGFTRPNHGYLESWARQGVLLLNTVLTVRAGQAHSHASLGWETFTDKVISLINQHREGVVFLLWGSHAQKKGAIIDKQRHHVLKAPHPSPLSAHRGFFGCNHFVLANQWLEQHGETPIDWMPVLPAESE</sequence>
<proteinExistence type="inferred from homology"/>
<feature type="chain" id="PRO_1000009938" description="Uracil-DNA glycosylase">
    <location>
        <begin position="1"/>
        <end position="229"/>
    </location>
</feature>
<feature type="active site" description="Proton acceptor" evidence="1">
    <location>
        <position position="64"/>
    </location>
</feature>
<gene>
    <name evidence="1" type="primary">ung</name>
    <name type="ordered locus">SDY_2823</name>
</gene>
<dbReference type="EC" id="3.2.2.27" evidence="1"/>
<dbReference type="EMBL" id="CP000034">
    <property type="protein sequence ID" value="ABB62866.1"/>
    <property type="molecule type" value="Genomic_DNA"/>
</dbReference>
<dbReference type="RefSeq" id="WP_001262720.1">
    <property type="nucleotide sequence ID" value="NC_007606.1"/>
</dbReference>
<dbReference type="RefSeq" id="YP_404357.1">
    <property type="nucleotide sequence ID" value="NC_007606.1"/>
</dbReference>
<dbReference type="SMR" id="Q32CT9"/>
<dbReference type="STRING" id="300267.SDY_2823"/>
<dbReference type="EnsemblBacteria" id="ABB62866">
    <property type="protein sequence ID" value="ABB62866"/>
    <property type="gene ID" value="SDY_2823"/>
</dbReference>
<dbReference type="KEGG" id="sdy:SDY_2823"/>
<dbReference type="PATRIC" id="fig|300267.13.peg.3400"/>
<dbReference type="HOGENOM" id="CLU_032162_3_0_6"/>
<dbReference type="Proteomes" id="UP000002716">
    <property type="component" value="Chromosome"/>
</dbReference>
<dbReference type="GO" id="GO:0005737">
    <property type="term" value="C:cytoplasm"/>
    <property type="evidence" value="ECO:0007669"/>
    <property type="project" value="UniProtKB-SubCell"/>
</dbReference>
<dbReference type="GO" id="GO:0004844">
    <property type="term" value="F:uracil DNA N-glycosylase activity"/>
    <property type="evidence" value="ECO:0007669"/>
    <property type="project" value="UniProtKB-UniRule"/>
</dbReference>
<dbReference type="GO" id="GO:0097510">
    <property type="term" value="P:base-excision repair, AP site formation via deaminated base removal"/>
    <property type="evidence" value="ECO:0007669"/>
    <property type="project" value="TreeGrafter"/>
</dbReference>
<dbReference type="CDD" id="cd10027">
    <property type="entry name" value="UDG-F1-like"/>
    <property type="match status" value="1"/>
</dbReference>
<dbReference type="FunFam" id="3.40.470.10:FF:000001">
    <property type="entry name" value="Uracil-DNA glycosylase"/>
    <property type="match status" value="1"/>
</dbReference>
<dbReference type="Gene3D" id="3.40.470.10">
    <property type="entry name" value="Uracil-DNA glycosylase-like domain"/>
    <property type="match status" value="1"/>
</dbReference>
<dbReference type="HAMAP" id="MF_00148">
    <property type="entry name" value="UDG"/>
    <property type="match status" value="1"/>
</dbReference>
<dbReference type="InterPro" id="IPR002043">
    <property type="entry name" value="UDG_fam1"/>
</dbReference>
<dbReference type="InterPro" id="IPR018085">
    <property type="entry name" value="Ura-DNA_Glyclase_AS"/>
</dbReference>
<dbReference type="InterPro" id="IPR005122">
    <property type="entry name" value="Uracil-DNA_glycosylase-like"/>
</dbReference>
<dbReference type="InterPro" id="IPR036895">
    <property type="entry name" value="Uracil-DNA_glycosylase-like_sf"/>
</dbReference>
<dbReference type="NCBIfam" id="NF003588">
    <property type="entry name" value="PRK05254.1-1"/>
    <property type="match status" value="1"/>
</dbReference>
<dbReference type="NCBIfam" id="NF003589">
    <property type="entry name" value="PRK05254.1-2"/>
    <property type="match status" value="1"/>
</dbReference>
<dbReference type="NCBIfam" id="NF003591">
    <property type="entry name" value="PRK05254.1-4"/>
    <property type="match status" value="1"/>
</dbReference>
<dbReference type="NCBIfam" id="NF003592">
    <property type="entry name" value="PRK05254.1-5"/>
    <property type="match status" value="1"/>
</dbReference>
<dbReference type="NCBIfam" id="TIGR00628">
    <property type="entry name" value="ung"/>
    <property type="match status" value="1"/>
</dbReference>
<dbReference type="PANTHER" id="PTHR11264">
    <property type="entry name" value="URACIL-DNA GLYCOSYLASE"/>
    <property type="match status" value="1"/>
</dbReference>
<dbReference type="PANTHER" id="PTHR11264:SF0">
    <property type="entry name" value="URACIL-DNA GLYCOSYLASE"/>
    <property type="match status" value="1"/>
</dbReference>
<dbReference type="Pfam" id="PF03167">
    <property type="entry name" value="UDG"/>
    <property type="match status" value="1"/>
</dbReference>
<dbReference type="SMART" id="SM00986">
    <property type="entry name" value="UDG"/>
    <property type="match status" value="1"/>
</dbReference>
<dbReference type="SMART" id="SM00987">
    <property type="entry name" value="UreE_C"/>
    <property type="match status" value="1"/>
</dbReference>
<dbReference type="SUPFAM" id="SSF52141">
    <property type="entry name" value="Uracil-DNA glycosylase-like"/>
    <property type="match status" value="1"/>
</dbReference>
<dbReference type="PROSITE" id="PS00130">
    <property type="entry name" value="U_DNA_GLYCOSYLASE"/>
    <property type="match status" value="1"/>
</dbReference>
<comment type="function">
    <text evidence="1">Excises uracil residues from the DNA which can arise as a result of misincorporation of dUMP residues by DNA polymerase or due to deamination of cytosine.</text>
</comment>
<comment type="catalytic activity">
    <reaction evidence="1">
        <text>Hydrolyzes single-stranded DNA or mismatched double-stranded DNA and polynucleotides, releasing free uracil.</text>
        <dbReference type="EC" id="3.2.2.27"/>
    </reaction>
</comment>
<comment type="subcellular location">
    <subcellularLocation>
        <location evidence="1">Cytoplasm</location>
    </subcellularLocation>
</comment>
<comment type="similarity">
    <text evidence="1">Belongs to the uracil-DNA glycosylase (UDG) superfamily. UNG family.</text>
</comment>
<name>UNG_SHIDS</name>
<organism>
    <name type="scientific">Shigella dysenteriae serotype 1 (strain Sd197)</name>
    <dbReference type="NCBI Taxonomy" id="300267"/>
    <lineage>
        <taxon>Bacteria</taxon>
        <taxon>Pseudomonadati</taxon>
        <taxon>Pseudomonadota</taxon>
        <taxon>Gammaproteobacteria</taxon>
        <taxon>Enterobacterales</taxon>
        <taxon>Enterobacteriaceae</taxon>
        <taxon>Shigella</taxon>
    </lineage>
</organism>
<accession>Q32CT9</accession>
<reference key="1">
    <citation type="journal article" date="2005" name="Nucleic Acids Res.">
        <title>Genome dynamics and diversity of Shigella species, the etiologic agents of bacillary dysentery.</title>
        <authorList>
            <person name="Yang F."/>
            <person name="Yang J."/>
            <person name="Zhang X."/>
            <person name="Chen L."/>
            <person name="Jiang Y."/>
            <person name="Yan Y."/>
            <person name="Tang X."/>
            <person name="Wang J."/>
            <person name="Xiong Z."/>
            <person name="Dong J."/>
            <person name="Xue Y."/>
            <person name="Zhu Y."/>
            <person name="Xu X."/>
            <person name="Sun L."/>
            <person name="Chen S."/>
            <person name="Nie H."/>
            <person name="Peng J."/>
            <person name="Xu J."/>
            <person name="Wang Y."/>
            <person name="Yuan Z."/>
            <person name="Wen Y."/>
            <person name="Yao Z."/>
            <person name="Shen Y."/>
            <person name="Qiang B."/>
            <person name="Hou Y."/>
            <person name="Yu J."/>
            <person name="Jin Q."/>
        </authorList>
    </citation>
    <scope>NUCLEOTIDE SEQUENCE [LARGE SCALE GENOMIC DNA]</scope>
    <source>
        <strain>Sd197</strain>
    </source>
</reference>
<evidence type="ECO:0000255" key="1">
    <source>
        <dbReference type="HAMAP-Rule" id="MF_00148"/>
    </source>
</evidence>
<keyword id="KW-0963">Cytoplasm</keyword>
<keyword id="KW-0227">DNA damage</keyword>
<keyword id="KW-0234">DNA repair</keyword>
<keyword id="KW-0378">Hydrolase</keyword>
<keyword id="KW-1185">Reference proteome</keyword>
<protein>
    <recommendedName>
        <fullName evidence="1">Uracil-DNA glycosylase</fullName>
        <shortName evidence="1">UDG</shortName>
        <ecNumber evidence="1">3.2.2.27</ecNumber>
    </recommendedName>
</protein>